<evidence type="ECO:0000250" key="1"/>
<evidence type="ECO:0000255" key="2"/>
<evidence type="ECO:0000256" key="3">
    <source>
        <dbReference type="SAM" id="MobiDB-lite"/>
    </source>
</evidence>
<evidence type="ECO:0000305" key="4"/>
<reference key="1">
    <citation type="journal article" date="2009" name="Genome Res.">
        <title>Comparative genomics of protoploid Saccharomycetaceae.</title>
        <authorList>
            <consortium name="The Genolevures Consortium"/>
            <person name="Souciet J.-L."/>
            <person name="Dujon B."/>
            <person name="Gaillardin C."/>
            <person name="Johnston M."/>
            <person name="Baret P.V."/>
            <person name="Cliften P."/>
            <person name="Sherman D.J."/>
            <person name="Weissenbach J."/>
            <person name="Westhof E."/>
            <person name="Wincker P."/>
            <person name="Jubin C."/>
            <person name="Poulain J."/>
            <person name="Barbe V."/>
            <person name="Segurens B."/>
            <person name="Artiguenave F."/>
            <person name="Anthouard V."/>
            <person name="Vacherie B."/>
            <person name="Val M.-E."/>
            <person name="Fulton R.S."/>
            <person name="Minx P."/>
            <person name="Wilson R."/>
            <person name="Durrens P."/>
            <person name="Jean G."/>
            <person name="Marck C."/>
            <person name="Martin T."/>
            <person name="Nikolski M."/>
            <person name="Rolland T."/>
            <person name="Seret M.-L."/>
            <person name="Casaregola S."/>
            <person name="Despons L."/>
            <person name="Fairhead C."/>
            <person name="Fischer G."/>
            <person name="Lafontaine I."/>
            <person name="Leh V."/>
            <person name="Lemaire M."/>
            <person name="de Montigny J."/>
            <person name="Neuveglise C."/>
            <person name="Thierry A."/>
            <person name="Blanc-Lenfle I."/>
            <person name="Bleykasten C."/>
            <person name="Diffels J."/>
            <person name="Fritsch E."/>
            <person name="Frangeul L."/>
            <person name="Goeffon A."/>
            <person name="Jauniaux N."/>
            <person name="Kachouri-Lafond R."/>
            <person name="Payen C."/>
            <person name="Potier S."/>
            <person name="Pribylova L."/>
            <person name="Ozanne C."/>
            <person name="Richard G.-F."/>
            <person name="Sacerdot C."/>
            <person name="Straub M.-L."/>
            <person name="Talla E."/>
        </authorList>
    </citation>
    <scope>NUCLEOTIDE SEQUENCE [LARGE SCALE GENOMIC DNA]</scope>
    <source>
        <strain>ATCC 2623 / CBS 732 / BCRC 21506 / NBRC 1130 / NCYC 568 / NRRL Y-229</strain>
    </source>
</reference>
<name>SHE3_ZYGRC</name>
<feature type="chain" id="PRO_0000408942" description="SWI5-dependent HO expression protein 3">
    <location>
        <begin position="1"/>
        <end position="482"/>
    </location>
</feature>
<feature type="region of interest" description="Disordered" evidence="3">
    <location>
        <begin position="1"/>
        <end position="90"/>
    </location>
</feature>
<feature type="region of interest" description="Disordered" evidence="3">
    <location>
        <begin position="163"/>
        <end position="190"/>
    </location>
</feature>
<feature type="region of interest" description="Disordered" evidence="3">
    <location>
        <begin position="353"/>
        <end position="378"/>
    </location>
</feature>
<feature type="region of interest" description="Disordered" evidence="3">
    <location>
        <begin position="390"/>
        <end position="482"/>
    </location>
</feature>
<feature type="coiled-coil region" evidence="2">
    <location>
        <begin position="127"/>
        <end position="292"/>
    </location>
</feature>
<feature type="compositionally biased region" description="Polar residues" evidence="3">
    <location>
        <begin position="75"/>
        <end position="90"/>
    </location>
</feature>
<feature type="compositionally biased region" description="Basic and acidic residues" evidence="3">
    <location>
        <begin position="173"/>
        <end position="188"/>
    </location>
</feature>
<feature type="compositionally biased region" description="Polar residues" evidence="3">
    <location>
        <begin position="360"/>
        <end position="371"/>
    </location>
</feature>
<feature type="compositionally biased region" description="Polar residues" evidence="3">
    <location>
        <begin position="413"/>
        <end position="423"/>
    </location>
</feature>
<feature type="compositionally biased region" description="Low complexity" evidence="3">
    <location>
        <begin position="430"/>
        <end position="469"/>
    </location>
</feature>
<accession>C5DUI8</accession>
<organism>
    <name type="scientific">Zygosaccharomyces rouxii (strain ATCC 2623 / CBS 732 / NBRC 1130 / NCYC 568 / NRRL Y-229)</name>
    <dbReference type="NCBI Taxonomy" id="559307"/>
    <lineage>
        <taxon>Eukaryota</taxon>
        <taxon>Fungi</taxon>
        <taxon>Dikarya</taxon>
        <taxon>Ascomycota</taxon>
        <taxon>Saccharomycotina</taxon>
        <taxon>Saccharomycetes</taxon>
        <taxon>Saccharomycetales</taxon>
        <taxon>Saccharomycetaceae</taxon>
        <taxon>Zygosaccharomyces</taxon>
    </lineage>
</organism>
<protein>
    <recommendedName>
        <fullName>SWI5-dependent HO expression protein 3</fullName>
    </recommendedName>
</protein>
<gene>
    <name type="primary">SHE3</name>
    <name type="ordered locus">ZYRO0C17094g</name>
</gene>
<keyword id="KW-0175">Coiled coil</keyword>
<keyword id="KW-0256">Endoplasmic reticulum</keyword>
<keyword id="KW-0472">Membrane</keyword>
<keyword id="KW-0509">mRNA transport</keyword>
<keyword id="KW-1185">Reference proteome</keyword>
<keyword id="KW-0694">RNA-binding</keyword>
<keyword id="KW-0813">Transport</keyword>
<dbReference type="EMBL" id="CU928175">
    <property type="protein sequence ID" value="CAR27449.1"/>
    <property type="molecule type" value="Genomic_DNA"/>
</dbReference>
<dbReference type="RefSeq" id="XP_002496382.1">
    <property type="nucleotide sequence ID" value="XM_002496337.1"/>
</dbReference>
<dbReference type="SMR" id="C5DUI8"/>
<dbReference type="FunCoup" id="C5DUI8">
    <property type="interactions" value="1505"/>
</dbReference>
<dbReference type="STRING" id="559307.C5DUI8"/>
<dbReference type="GeneID" id="8203613"/>
<dbReference type="KEGG" id="zro:ZYRO0C17094g"/>
<dbReference type="HOGENOM" id="CLU_038734_0_0_1"/>
<dbReference type="InParanoid" id="C5DUI8"/>
<dbReference type="Proteomes" id="UP000008536">
    <property type="component" value="Chromosome C"/>
</dbReference>
<dbReference type="GO" id="GO:0005789">
    <property type="term" value="C:endoplasmic reticulum membrane"/>
    <property type="evidence" value="ECO:0007669"/>
    <property type="project" value="UniProtKB-SubCell"/>
</dbReference>
<dbReference type="GO" id="GO:0003723">
    <property type="term" value="F:RNA binding"/>
    <property type="evidence" value="ECO:0007669"/>
    <property type="project" value="UniProtKB-KW"/>
</dbReference>
<dbReference type="GO" id="GO:0048309">
    <property type="term" value="P:endoplasmic reticulum inheritance"/>
    <property type="evidence" value="ECO:0007669"/>
    <property type="project" value="InterPro"/>
</dbReference>
<dbReference type="GO" id="GO:0051028">
    <property type="term" value="P:mRNA transport"/>
    <property type="evidence" value="ECO:0007669"/>
    <property type="project" value="UniProtKB-KW"/>
</dbReference>
<dbReference type="InterPro" id="IPR031398">
    <property type="entry name" value="She3"/>
</dbReference>
<dbReference type="Pfam" id="PF17078">
    <property type="entry name" value="SHE3"/>
    <property type="match status" value="1"/>
</dbReference>
<sequence>MTEDFEVNLGTGGEDNSSSTMEHRVLDSPPRVVIPEDTESPAKLAPNHGIFMASINKSSPAGKKSGEGAVLGMGAQSTKDNSTPRQNSSMLSTRVIESLHDQVDTLTSTNLQLTVQSKNLLDKLDTAQQKESKMLENSASLKHENENLVSMLNRKTRRLKDVEEELASHKKNHDSLEEEKTALQKKWESSSSEEATLRQQMEMVQAQYDALVDSHQYYKSHYSSQISTLSEQLENLKLEQRNYTQRVSDEANTFNAKLLEFDSKHANLQQAEETRVKYLESKYDSLTQQLDLPSWVQLYRESKNMVLEFAEKMKLKIPSDFETLIQDPELTALEAKNPNSNNAAALPLRVAKQRAGGGNATSTQSGTSGSNAAHGKRSSFYGGMASSYPASTLPGTLPGVRRSSSRRKPSSRVASDNSNSGDSSPIFPHSAVATAPRSSATAPSSRVSSTSTSSSTNHFAFHNNNSNNTYRKRQESTSVGNS</sequence>
<proteinExistence type="inferred from homology"/>
<comment type="function">
    <text evidence="1">RNA-binding protein that binds specific mRNAs including the ASH1 mRNA, coding for a repressor of the HO endonuclease. Part of the mRNA localization machinery that restricts accumulation of certain proteins to the bud and in the daughter cell. Required for the delivery of cortical endoplasmic reticulum into the emerging bud (By similarity).</text>
</comment>
<comment type="subcellular location">
    <subcellularLocation>
        <location evidence="1">Endoplasmic reticulum membrane</location>
        <topology evidence="1">Peripheral membrane protein</topology>
    </subcellularLocation>
</comment>
<comment type="similarity">
    <text evidence="4">Belongs to the SHE3 family.</text>
</comment>